<sequence>MTAILITGYRSFEIGIFDHKDPRVSIIKQAIRKDLIGYLENGVDWFIFTGNLGFEQWALEVANELKEEYPLQIATIFLFETHGDKWNEKNQEVLSQFRAVDFVKYYFPNYEQPTQFSQYYQFLLEKTEGAYVFYDTENETNLKYFLKKAKDMPYYQLLLLTFDRLNDMSQS</sequence>
<evidence type="ECO:0000255" key="1">
    <source>
        <dbReference type="HAMAP-Rule" id="MF_01575"/>
    </source>
</evidence>
<gene>
    <name type="ordered locus">MGAS10270_Spy1470</name>
</gene>
<accession>Q1JFM4</accession>
<dbReference type="EMBL" id="CP000260">
    <property type="protein sequence ID" value="ABF34535.1"/>
    <property type="molecule type" value="Genomic_DNA"/>
</dbReference>
<dbReference type="SMR" id="Q1JFM4"/>
<dbReference type="KEGG" id="sph:MGAS10270_Spy1470"/>
<dbReference type="HOGENOM" id="CLU_105319_0_0_9"/>
<dbReference type="Proteomes" id="UP000002436">
    <property type="component" value="Chromosome"/>
</dbReference>
<dbReference type="Gene3D" id="3.40.50.450">
    <property type="match status" value="1"/>
</dbReference>
<dbReference type="HAMAP" id="MF_01575">
    <property type="entry name" value="UPF0398"/>
    <property type="match status" value="1"/>
</dbReference>
<dbReference type="InterPro" id="IPR010697">
    <property type="entry name" value="YspA"/>
</dbReference>
<dbReference type="NCBIfam" id="NF010181">
    <property type="entry name" value="PRK13660.1"/>
    <property type="match status" value="1"/>
</dbReference>
<dbReference type="PANTHER" id="PTHR38440:SF1">
    <property type="entry name" value="UPF0398 PROTEIN SPR0331"/>
    <property type="match status" value="1"/>
</dbReference>
<dbReference type="PANTHER" id="PTHR38440">
    <property type="entry name" value="UPF0398 PROTEIN YPSA"/>
    <property type="match status" value="1"/>
</dbReference>
<dbReference type="Pfam" id="PF06908">
    <property type="entry name" value="YpsA"/>
    <property type="match status" value="1"/>
</dbReference>
<dbReference type="PIRSF" id="PIRSF021290">
    <property type="entry name" value="DUF1273"/>
    <property type="match status" value="1"/>
</dbReference>
<dbReference type="SUPFAM" id="SSF102405">
    <property type="entry name" value="MCP/YpsA-like"/>
    <property type="match status" value="1"/>
</dbReference>
<organism>
    <name type="scientific">Streptococcus pyogenes serotype M2 (strain MGAS10270)</name>
    <dbReference type="NCBI Taxonomy" id="370552"/>
    <lineage>
        <taxon>Bacteria</taxon>
        <taxon>Bacillati</taxon>
        <taxon>Bacillota</taxon>
        <taxon>Bacilli</taxon>
        <taxon>Lactobacillales</taxon>
        <taxon>Streptococcaceae</taxon>
        <taxon>Streptococcus</taxon>
    </lineage>
</organism>
<comment type="similarity">
    <text evidence="1">Belongs to the UPF0398 family.</text>
</comment>
<reference key="1">
    <citation type="journal article" date="2006" name="Proc. Natl. Acad. Sci. U.S.A.">
        <title>Molecular genetic anatomy of inter- and intraserotype variation in the human bacterial pathogen group A Streptococcus.</title>
        <authorList>
            <person name="Beres S.B."/>
            <person name="Richter E.W."/>
            <person name="Nagiec M.J."/>
            <person name="Sumby P."/>
            <person name="Porcella S.F."/>
            <person name="DeLeo F.R."/>
            <person name="Musser J.M."/>
        </authorList>
    </citation>
    <scope>NUCLEOTIDE SEQUENCE [LARGE SCALE GENOMIC DNA]</scope>
    <source>
        <strain>MGAS10270</strain>
    </source>
</reference>
<feature type="chain" id="PRO_0000267191" description="UPF0398 protein MGAS10270_Spy1470">
    <location>
        <begin position="1"/>
        <end position="171"/>
    </location>
</feature>
<proteinExistence type="inferred from homology"/>
<name>Y1470_STRPD</name>
<protein>
    <recommendedName>
        <fullName evidence="1">UPF0398 protein MGAS10270_Spy1470</fullName>
    </recommendedName>
</protein>